<organism>
    <name type="scientific">Arabidopsis thaliana</name>
    <name type="common">Mouse-ear cress</name>
    <dbReference type="NCBI Taxonomy" id="3702"/>
    <lineage>
        <taxon>Eukaryota</taxon>
        <taxon>Viridiplantae</taxon>
        <taxon>Streptophyta</taxon>
        <taxon>Embryophyta</taxon>
        <taxon>Tracheophyta</taxon>
        <taxon>Spermatophyta</taxon>
        <taxon>Magnoliopsida</taxon>
        <taxon>eudicotyledons</taxon>
        <taxon>Gunneridae</taxon>
        <taxon>Pentapetalae</taxon>
        <taxon>rosids</taxon>
        <taxon>malvids</taxon>
        <taxon>Brassicales</taxon>
        <taxon>Brassicaceae</taxon>
        <taxon>Camelineae</taxon>
        <taxon>Arabidopsis</taxon>
    </lineage>
</organism>
<evidence type="ECO:0000250" key="1"/>
<evidence type="ECO:0000255" key="2"/>
<evidence type="ECO:0000255" key="3">
    <source>
        <dbReference type="PROSITE-ProRule" id="PRU10009"/>
    </source>
</evidence>
<evidence type="ECO:0000269" key="4">
    <source>
    </source>
</evidence>
<evidence type="ECO:0000269" key="5">
    <source>
    </source>
</evidence>
<evidence type="ECO:0000305" key="6"/>
<evidence type="ECO:0000305" key="7">
    <source>
    </source>
</evidence>
<comment type="function">
    <text evidence="4 5">Involved in plastidial glycolytic pathway and plays a specific role in glycolytic energy production in non-green plastids and chloroplasts. Essential for breakdown of starch to form sucrose for export to non-photosynthetic tissues, and to generate primary metabolites for anabolic pathways such as fatty acid and amino acid synthesis. Plays an important role in plant development by providing substrates for the phosphorylated pathway of serine biosynthesis in roots. Plays a crucial role in pollen development. Functionally redundant with GAPCP1.</text>
</comment>
<comment type="catalytic activity">
    <reaction evidence="3">
        <text>D-glyceraldehyde 3-phosphate + phosphate + NAD(+) = (2R)-3-phospho-glyceroyl phosphate + NADH + H(+)</text>
        <dbReference type="Rhea" id="RHEA:10300"/>
        <dbReference type="ChEBI" id="CHEBI:15378"/>
        <dbReference type="ChEBI" id="CHEBI:43474"/>
        <dbReference type="ChEBI" id="CHEBI:57540"/>
        <dbReference type="ChEBI" id="CHEBI:57604"/>
        <dbReference type="ChEBI" id="CHEBI:57945"/>
        <dbReference type="ChEBI" id="CHEBI:59776"/>
        <dbReference type="EC" id="1.2.1.12"/>
    </reaction>
</comment>
<comment type="subunit">
    <text evidence="1">Homotetramer.</text>
</comment>
<comment type="subcellular location">
    <subcellularLocation>
        <location evidence="7">Plastid</location>
        <location evidence="7">Chloroplast stroma</location>
    </subcellularLocation>
</comment>
<comment type="tissue specificity">
    <text evidence="4">Expressed in shoot and root vasculature, leaf veins and vascular tissue of flowers and siliques.</text>
</comment>
<comment type="disruption phenotype">
    <text evidence="4 5">No visible phenotype under normal growth conditions. Gapcp1 and gapcp2 double mutants have severe dwarf phenotypes with arrested root development and male sterility. Pollen grains show shrunken and collapsed forms and cannot germinate.</text>
</comment>
<comment type="similarity">
    <text evidence="6">Belongs to the glyceraldehyde-3-phosphate dehydrogenase family.</text>
</comment>
<comment type="sequence caution" evidence="6">
    <conflict type="erroneous gene model prediction">
        <sequence resource="EMBL-CDS" id="AAD34682"/>
    </conflict>
</comment>
<gene>
    <name type="primary">GAPCP2</name>
    <name type="ordered locus">At1g16300</name>
    <name type="ORF">F3O9.10</name>
</gene>
<name>G3PP2_ARATH</name>
<sequence>MALSSLLRSAATSAAAPRVELYPSSSYNHSQVTSSLGFSHSLTSSRFSGAAVSTGKYNAKRVQPIKATATEAPPAVHRSRSSGKTKVGINGFGRIGRLVLRIATFRDDIEVVAVNDPFIDAKYMAYMFKYDSTHGNYKGTINVIDDSTLEINGKQVKVVSKRDPAEIPWADLGAEYVVESSGVFTTVGQASSHLKGGAKKVIISAPSADAPMFVVGVNEKTYLPNMDIVSNASCTTNCLAPLAKVVHEEFGILEGLMTTVHATTATQKTVDGPSMKDWRGGRGASQNIIPSSTGAAKAVGKVLPELNGKLTGMAFRVPTPNVSVVDLTCRLEKDASYEDVKAAIKFASEGPLRGILGYTEEDVVSNDFLGDSRSSIFDANAGIGLSKSFMKLVSWYDNEWGYSNRVLDLIEHMALVAASR</sequence>
<reference key="1">
    <citation type="journal article" date="2000" name="Nature">
        <title>Sequence and analysis of chromosome 1 of the plant Arabidopsis thaliana.</title>
        <authorList>
            <person name="Theologis A."/>
            <person name="Ecker J.R."/>
            <person name="Palm C.J."/>
            <person name="Federspiel N.A."/>
            <person name="Kaul S."/>
            <person name="White O."/>
            <person name="Alonso J."/>
            <person name="Altafi H."/>
            <person name="Araujo R."/>
            <person name="Bowman C.L."/>
            <person name="Brooks S.Y."/>
            <person name="Buehler E."/>
            <person name="Chan A."/>
            <person name="Chao Q."/>
            <person name="Chen H."/>
            <person name="Cheuk R.F."/>
            <person name="Chin C.W."/>
            <person name="Chung M.K."/>
            <person name="Conn L."/>
            <person name="Conway A.B."/>
            <person name="Conway A.R."/>
            <person name="Creasy T.H."/>
            <person name="Dewar K."/>
            <person name="Dunn P."/>
            <person name="Etgu P."/>
            <person name="Feldblyum T.V."/>
            <person name="Feng J.-D."/>
            <person name="Fong B."/>
            <person name="Fujii C.Y."/>
            <person name="Gill J.E."/>
            <person name="Goldsmith A.D."/>
            <person name="Haas B."/>
            <person name="Hansen N.F."/>
            <person name="Hughes B."/>
            <person name="Huizar L."/>
            <person name="Hunter J.L."/>
            <person name="Jenkins J."/>
            <person name="Johnson-Hopson C."/>
            <person name="Khan S."/>
            <person name="Khaykin E."/>
            <person name="Kim C.J."/>
            <person name="Koo H.L."/>
            <person name="Kremenetskaia I."/>
            <person name="Kurtz D.B."/>
            <person name="Kwan A."/>
            <person name="Lam B."/>
            <person name="Langin-Hooper S."/>
            <person name="Lee A."/>
            <person name="Lee J.M."/>
            <person name="Lenz C.A."/>
            <person name="Li J.H."/>
            <person name="Li Y.-P."/>
            <person name="Lin X."/>
            <person name="Liu S.X."/>
            <person name="Liu Z.A."/>
            <person name="Luros J.S."/>
            <person name="Maiti R."/>
            <person name="Marziali A."/>
            <person name="Militscher J."/>
            <person name="Miranda M."/>
            <person name="Nguyen M."/>
            <person name="Nierman W.C."/>
            <person name="Osborne B.I."/>
            <person name="Pai G."/>
            <person name="Peterson J."/>
            <person name="Pham P.K."/>
            <person name="Rizzo M."/>
            <person name="Rooney T."/>
            <person name="Rowley D."/>
            <person name="Sakano H."/>
            <person name="Salzberg S.L."/>
            <person name="Schwartz J.R."/>
            <person name="Shinn P."/>
            <person name="Southwick A.M."/>
            <person name="Sun H."/>
            <person name="Tallon L.J."/>
            <person name="Tambunga G."/>
            <person name="Toriumi M.J."/>
            <person name="Town C.D."/>
            <person name="Utterback T."/>
            <person name="Van Aken S."/>
            <person name="Vaysberg M."/>
            <person name="Vysotskaia V.S."/>
            <person name="Walker M."/>
            <person name="Wu D."/>
            <person name="Yu G."/>
            <person name="Fraser C.M."/>
            <person name="Venter J.C."/>
            <person name="Davis R.W."/>
        </authorList>
    </citation>
    <scope>NUCLEOTIDE SEQUENCE [LARGE SCALE GENOMIC DNA]</scope>
    <source>
        <strain>cv. Columbia</strain>
    </source>
</reference>
<reference key="2">
    <citation type="journal article" date="2017" name="Plant J.">
        <title>Araport11: a complete reannotation of the Arabidopsis thaliana reference genome.</title>
        <authorList>
            <person name="Cheng C.Y."/>
            <person name="Krishnakumar V."/>
            <person name="Chan A.P."/>
            <person name="Thibaud-Nissen F."/>
            <person name="Schobel S."/>
            <person name="Town C.D."/>
        </authorList>
    </citation>
    <scope>GENOME REANNOTATION</scope>
    <source>
        <strain>cv. Columbia</strain>
    </source>
</reference>
<reference key="3">
    <citation type="journal article" date="2003" name="Science">
        <title>Empirical analysis of transcriptional activity in the Arabidopsis genome.</title>
        <authorList>
            <person name="Yamada K."/>
            <person name="Lim J."/>
            <person name="Dale J.M."/>
            <person name="Chen H."/>
            <person name="Shinn P."/>
            <person name="Palm C.J."/>
            <person name="Southwick A.M."/>
            <person name="Wu H.C."/>
            <person name="Kim C.J."/>
            <person name="Nguyen M."/>
            <person name="Pham P.K."/>
            <person name="Cheuk R.F."/>
            <person name="Karlin-Newmann G."/>
            <person name="Liu S.X."/>
            <person name="Lam B."/>
            <person name="Sakano H."/>
            <person name="Wu T."/>
            <person name="Yu G."/>
            <person name="Miranda M."/>
            <person name="Quach H.L."/>
            <person name="Tripp M."/>
            <person name="Chang C.H."/>
            <person name="Lee J.M."/>
            <person name="Toriumi M.J."/>
            <person name="Chan M.M."/>
            <person name="Tang C.C."/>
            <person name="Onodera C.S."/>
            <person name="Deng J.M."/>
            <person name="Akiyama K."/>
            <person name="Ansari Y."/>
            <person name="Arakawa T."/>
            <person name="Banh J."/>
            <person name="Banno F."/>
            <person name="Bowser L."/>
            <person name="Brooks S.Y."/>
            <person name="Carninci P."/>
            <person name="Chao Q."/>
            <person name="Choy N."/>
            <person name="Enju A."/>
            <person name="Goldsmith A.D."/>
            <person name="Gurjal M."/>
            <person name="Hansen N.F."/>
            <person name="Hayashizaki Y."/>
            <person name="Johnson-Hopson C."/>
            <person name="Hsuan V.W."/>
            <person name="Iida K."/>
            <person name="Karnes M."/>
            <person name="Khan S."/>
            <person name="Koesema E."/>
            <person name="Ishida J."/>
            <person name="Jiang P.X."/>
            <person name="Jones T."/>
            <person name="Kawai J."/>
            <person name="Kamiya A."/>
            <person name="Meyers C."/>
            <person name="Nakajima M."/>
            <person name="Narusaka M."/>
            <person name="Seki M."/>
            <person name="Sakurai T."/>
            <person name="Satou M."/>
            <person name="Tamse R."/>
            <person name="Vaysberg M."/>
            <person name="Wallender E.K."/>
            <person name="Wong C."/>
            <person name="Yamamura Y."/>
            <person name="Yuan S."/>
            <person name="Shinozaki K."/>
            <person name="Davis R.W."/>
            <person name="Theologis A."/>
            <person name="Ecker J.R."/>
        </authorList>
    </citation>
    <scope>NUCLEOTIDE SEQUENCE [LARGE SCALE MRNA]</scope>
    <source>
        <strain>cv. Columbia</strain>
    </source>
</reference>
<reference key="4">
    <citation type="submission" date="2005-02" db="EMBL/GenBank/DDBJ databases">
        <title>Arabidopsis ORF clones.</title>
        <authorList>
            <person name="Kim C.J."/>
            <person name="Chen H."/>
            <person name="Cheuk R.F."/>
            <person name="Shinn P."/>
            <person name="Ecker J.R."/>
        </authorList>
    </citation>
    <scope>NUCLEOTIDE SEQUENCE [LARGE SCALE MRNA]</scope>
    <source>
        <strain>cv. Columbia</strain>
    </source>
</reference>
<reference key="5">
    <citation type="submission" date="2002-03" db="EMBL/GenBank/DDBJ databases">
        <title>Full-length cDNA from Arabidopsis thaliana.</title>
        <authorList>
            <person name="Brover V.V."/>
            <person name="Troukhan M.E."/>
            <person name="Alexandrov N.A."/>
            <person name="Lu Y.-P."/>
            <person name="Flavell R.B."/>
            <person name="Feldmann K.A."/>
        </authorList>
    </citation>
    <scope>NUCLEOTIDE SEQUENCE [LARGE SCALE MRNA]</scope>
</reference>
<reference key="6">
    <citation type="journal article" date="2009" name="Plant Physiol.">
        <title>Plastidial glyceraldehyde-3-phosphate dehydrogenase deficiency leads to altered root development and affects the sugar and amino acid balance in Arabidopsis.</title>
        <authorList>
            <person name="Munoz-Bertomeu J."/>
            <person name="Cascales-Minana B."/>
            <person name="Mulet J.M."/>
            <person name="Baroja-Fernandez E."/>
            <person name="Pozueta-Romero J."/>
            <person name="Kuhn J.M."/>
            <person name="Segura J."/>
            <person name="Ros R."/>
        </authorList>
    </citation>
    <scope>FUNCTION</scope>
    <scope>SUBCELLULAR LOCATION</scope>
    <scope>TISSUE SPECIFICITY</scope>
    <scope>DISRUPTION PHENOTYPE</scope>
</reference>
<reference key="7">
    <citation type="journal article" date="2010" name="Plant Physiol.">
        <title>The plastidial glyceraldehyde-3-phosphate dehydrogenase is critical for viable pollen development in Arabidopsis.</title>
        <authorList>
            <person name="Munoz-Bertomeu J."/>
            <person name="Cascales-Minana B."/>
            <person name="Irles-Segura A."/>
            <person name="Mateu I."/>
            <person name="Nunes-Nesi A."/>
            <person name="Fernie A.R."/>
            <person name="Segura J."/>
            <person name="Ros R."/>
        </authorList>
    </citation>
    <scope>FUNCTION</scope>
    <scope>DISRUPTION PHENOTYPE</scope>
</reference>
<proteinExistence type="evidence at transcript level"/>
<protein>
    <recommendedName>
        <fullName>Glyceraldehyde-3-phosphate dehydrogenase GAPCP2, chloroplastic</fullName>
        <ecNumber>1.2.1.12</ecNumber>
    </recommendedName>
    <alternativeName>
        <fullName>Glyceraldehyde-3-phosphate dehydrogenase of plastid 2</fullName>
    </alternativeName>
    <alternativeName>
        <fullName>NAD-dependent glyceraldehydephosphate dehydrogenase chloroplastic 2</fullName>
    </alternativeName>
</protein>
<accession>Q5E924</accession>
<accession>Q84WR0</accession>
<accession>Q8L8W7</accession>
<accession>Q9SA29</accession>
<dbReference type="EC" id="1.2.1.12"/>
<dbReference type="EMBL" id="AC006341">
    <property type="protein sequence ID" value="AAD34682.1"/>
    <property type="status" value="ALT_SEQ"/>
    <property type="molecule type" value="Genomic_DNA"/>
</dbReference>
<dbReference type="EMBL" id="CP002684">
    <property type="protein sequence ID" value="AEE29433.1"/>
    <property type="molecule type" value="Genomic_DNA"/>
</dbReference>
<dbReference type="EMBL" id="BT002867">
    <property type="protein sequence ID" value="AAO22684.1"/>
    <property type="molecule type" value="mRNA"/>
</dbReference>
<dbReference type="EMBL" id="BT021096">
    <property type="protein sequence ID" value="AAX12866.1"/>
    <property type="molecule type" value="mRNA"/>
</dbReference>
<dbReference type="EMBL" id="AY088762">
    <property type="protein sequence ID" value="AAM67077.1"/>
    <property type="molecule type" value="mRNA"/>
</dbReference>
<dbReference type="PIR" id="A86298">
    <property type="entry name" value="A86298"/>
</dbReference>
<dbReference type="RefSeq" id="NP_173080.1">
    <property type="nucleotide sequence ID" value="NM_101496.3"/>
</dbReference>
<dbReference type="SMR" id="Q5E924"/>
<dbReference type="FunCoup" id="Q5E924">
    <property type="interactions" value="1653"/>
</dbReference>
<dbReference type="IntAct" id="Q5E924">
    <property type="interactions" value="3"/>
</dbReference>
<dbReference type="STRING" id="3702.Q5E924"/>
<dbReference type="iPTMnet" id="Q5E924"/>
<dbReference type="PaxDb" id="3702-AT1G16300.1"/>
<dbReference type="ProteomicsDB" id="230480"/>
<dbReference type="EnsemblPlants" id="AT1G16300.1">
    <property type="protein sequence ID" value="AT1G16300.1"/>
    <property type="gene ID" value="AT1G16300"/>
</dbReference>
<dbReference type="GeneID" id="838199"/>
<dbReference type="Gramene" id="AT1G16300.1">
    <property type="protein sequence ID" value="AT1G16300.1"/>
    <property type="gene ID" value="AT1G16300"/>
</dbReference>
<dbReference type="KEGG" id="ath:AT1G16300"/>
<dbReference type="Araport" id="AT1G16300"/>
<dbReference type="TAIR" id="AT1G16300">
    <property type="gene designation" value="GAPCP-2"/>
</dbReference>
<dbReference type="eggNOG" id="KOG0657">
    <property type="taxonomic scope" value="Eukaryota"/>
</dbReference>
<dbReference type="HOGENOM" id="CLU_030140_0_3_1"/>
<dbReference type="InParanoid" id="Q5E924"/>
<dbReference type="OMA" id="YGYTCNM"/>
<dbReference type="OrthoDB" id="1152826at2759"/>
<dbReference type="PhylomeDB" id="Q5E924"/>
<dbReference type="BRENDA" id="1.2.1.12">
    <property type="organism ID" value="399"/>
</dbReference>
<dbReference type="CD-CODE" id="4299E36E">
    <property type="entry name" value="Nucleolus"/>
</dbReference>
<dbReference type="PRO" id="PR:Q5E924"/>
<dbReference type="Proteomes" id="UP000006548">
    <property type="component" value="Chromosome 1"/>
</dbReference>
<dbReference type="ExpressionAtlas" id="Q5E924">
    <property type="expression patterns" value="baseline and differential"/>
</dbReference>
<dbReference type="GO" id="GO:0009570">
    <property type="term" value="C:chloroplast stroma"/>
    <property type="evidence" value="ECO:0007669"/>
    <property type="project" value="UniProtKB-SubCell"/>
</dbReference>
<dbReference type="GO" id="GO:0009536">
    <property type="term" value="C:plastid"/>
    <property type="evidence" value="ECO:0000314"/>
    <property type="project" value="TAIR"/>
</dbReference>
<dbReference type="GO" id="GO:0004365">
    <property type="term" value="F:glyceraldehyde-3-phosphate dehydrogenase (NAD+) (phosphorylating) activity"/>
    <property type="evidence" value="ECO:0000315"/>
    <property type="project" value="TAIR"/>
</dbReference>
<dbReference type="GO" id="GO:0051287">
    <property type="term" value="F:NAD binding"/>
    <property type="evidence" value="ECO:0007669"/>
    <property type="project" value="InterPro"/>
</dbReference>
<dbReference type="GO" id="GO:0050661">
    <property type="term" value="F:NADP binding"/>
    <property type="evidence" value="ECO:0007669"/>
    <property type="project" value="InterPro"/>
</dbReference>
<dbReference type="GO" id="GO:0005975">
    <property type="term" value="P:carbohydrate metabolic process"/>
    <property type="evidence" value="ECO:0000315"/>
    <property type="project" value="TAIR"/>
</dbReference>
<dbReference type="GO" id="GO:0006006">
    <property type="term" value="P:glucose metabolic process"/>
    <property type="evidence" value="ECO:0007669"/>
    <property type="project" value="InterPro"/>
</dbReference>
<dbReference type="GO" id="GO:0006096">
    <property type="term" value="P:glycolytic process"/>
    <property type="evidence" value="ECO:0007669"/>
    <property type="project" value="UniProtKB-KW"/>
</dbReference>
<dbReference type="GO" id="GO:0080144">
    <property type="term" value="P:intracellular amino acid homeostasis"/>
    <property type="evidence" value="ECO:0000315"/>
    <property type="project" value="TAIR"/>
</dbReference>
<dbReference type="GO" id="GO:0080022">
    <property type="term" value="P:primary root development"/>
    <property type="evidence" value="ECO:0000315"/>
    <property type="project" value="TAIR"/>
</dbReference>
<dbReference type="CDD" id="cd18126">
    <property type="entry name" value="GAPDH_I_C"/>
    <property type="match status" value="1"/>
</dbReference>
<dbReference type="CDD" id="cd05214">
    <property type="entry name" value="GAPDH_I_N"/>
    <property type="match status" value="1"/>
</dbReference>
<dbReference type="FunFam" id="3.30.360.10:FF:000001">
    <property type="entry name" value="Glyceraldehyde-3-phosphate dehydrogenase"/>
    <property type="match status" value="1"/>
</dbReference>
<dbReference type="FunFam" id="3.40.50.720:FF:000020">
    <property type="entry name" value="Glyceraldehyde-3-phosphate dehydrogenase"/>
    <property type="match status" value="1"/>
</dbReference>
<dbReference type="Gene3D" id="3.30.360.10">
    <property type="entry name" value="Dihydrodipicolinate Reductase, domain 2"/>
    <property type="match status" value="1"/>
</dbReference>
<dbReference type="Gene3D" id="3.40.50.720">
    <property type="entry name" value="NAD(P)-binding Rossmann-like Domain"/>
    <property type="match status" value="1"/>
</dbReference>
<dbReference type="InterPro" id="IPR020831">
    <property type="entry name" value="GlycerAld/Erythrose_P_DH"/>
</dbReference>
<dbReference type="InterPro" id="IPR020830">
    <property type="entry name" value="GlycerAld_3-P_DH_AS"/>
</dbReference>
<dbReference type="InterPro" id="IPR020829">
    <property type="entry name" value="GlycerAld_3-P_DH_cat"/>
</dbReference>
<dbReference type="InterPro" id="IPR020828">
    <property type="entry name" value="GlycerAld_3-P_DH_NAD(P)-bd"/>
</dbReference>
<dbReference type="InterPro" id="IPR006424">
    <property type="entry name" value="Glyceraldehyde-3-P_DH_1"/>
</dbReference>
<dbReference type="InterPro" id="IPR036291">
    <property type="entry name" value="NAD(P)-bd_dom_sf"/>
</dbReference>
<dbReference type="NCBIfam" id="TIGR01534">
    <property type="entry name" value="GAPDH-I"/>
    <property type="match status" value="1"/>
</dbReference>
<dbReference type="PANTHER" id="PTHR10836">
    <property type="entry name" value="GLYCERALDEHYDE 3-PHOSPHATE DEHYDROGENASE"/>
    <property type="match status" value="1"/>
</dbReference>
<dbReference type="PANTHER" id="PTHR10836:SF76">
    <property type="entry name" value="GLYCERALDEHYDE-3-PHOSPHATE DEHYDROGENASE-RELATED"/>
    <property type="match status" value="1"/>
</dbReference>
<dbReference type="Pfam" id="PF02800">
    <property type="entry name" value="Gp_dh_C"/>
    <property type="match status" value="1"/>
</dbReference>
<dbReference type="Pfam" id="PF00044">
    <property type="entry name" value="Gp_dh_N"/>
    <property type="match status" value="1"/>
</dbReference>
<dbReference type="PRINTS" id="PR00078">
    <property type="entry name" value="G3PDHDRGNASE"/>
</dbReference>
<dbReference type="SMART" id="SM00846">
    <property type="entry name" value="Gp_dh_N"/>
    <property type="match status" value="1"/>
</dbReference>
<dbReference type="SUPFAM" id="SSF55347">
    <property type="entry name" value="Glyceraldehyde-3-phosphate dehydrogenase-like, C-terminal domain"/>
    <property type="match status" value="1"/>
</dbReference>
<dbReference type="SUPFAM" id="SSF51735">
    <property type="entry name" value="NAD(P)-binding Rossmann-fold domains"/>
    <property type="match status" value="1"/>
</dbReference>
<dbReference type="PROSITE" id="PS00071">
    <property type="entry name" value="GAPDH"/>
    <property type="match status" value="1"/>
</dbReference>
<keyword id="KW-0150">Chloroplast</keyword>
<keyword id="KW-0324">Glycolysis</keyword>
<keyword id="KW-0520">NAD</keyword>
<keyword id="KW-0560">Oxidoreductase</keyword>
<keyword id="KW-0934">Plastid</keyword>
<keyword id="KW-1185">Reference proteome</keyword>
<keyword id="KW-0809">Transit peptide</keyword>
<feature type="transit peptide" description="Chloroplast" evidence="2">
    <location>
        <begin position="1"/>
        <end position="66"/>
    </location>
</feature>
<feature type="chain" id="PRO_0000422408" description="Glyceraldehyde-3-phosphate dehydrogenase GAPCP2, chloroplastic">
    <location>
        <begin position="67"/>
        <end position="420"/>
    </location>
</feature>
<feature type="active site" description="Nucleophile" evidence="3">
    <location>
        <position position="234"/>
    </location>
</feature>
<feature type="binding site" evidence="1">
    <location>
        <begin position="94"/>
        <end position="95"/>
    </location>
    <ligand>
        <name>NAD(+)</name>
        <dbReference type="ChEBI" id="CHEBI:57540"/>
    </ligand>
</feature>
<feature type="binding site" evidence="1">
    <location>
        <position position="116"/>
    </location>
    <ligand>
        <name>NAD(+)</name>
        <dbReference type="ChEBI" id="CHEBI:57540"/>
    </ligand>
</feature>
<feature type="binding site" evidence="1">
    <location>
        <position position="162"/>
    </location>
    <ligand>
        <name>NAD(+)</name>
        <dbReference type="ChEBI" id="CHEBI:57540"/>
    </ligand>
</feature>
<feature type="binding site" evidence="1">
    <location>
        <begin position="233"/>
        <end position="235"/>
    </location>
    <ligand>
        <name>D-glyceraldehyde 3-phosphate</name>
        <dbReference type="ChEBI" id="CHEBI:59776"/>
    </ligand>
</feature>
<feature type="binding site" evidence="1">
    <location>
        <position position="264"/>
    </location>
    <ligand>
        <name>D-glyceraldehyde 3-phosphate</name>
        <dbReference type="ChEBI" id="CHEBI:59776"/>
    </ligand>
</feature>
<feature type="binding site" evidence="1">
    <location>
        <begin position="293"/>
        <end position="294"/>
    </location>
    <ligand>
        <name>D-glyceraldehyde 3-phosphate</name>
        <dbReference type="ChEBI" id="CHEBI:59776"/>
    </ligand>
</feature>
<feature type="binding site" evidence="1">
    <location>
        <position position="316"/>
    </location>
    <ligand>
        <name>D-glyceraldehyde 3-phosphate</name>
        <dbReference type="ChEBI" id="CHEBI:59776"/>
    </ligand>
</feature>
<feature type="binding site" evidence="1">
    <location>
        <position position="398"/>
    </location>
    <ligand>
        <name>NAD(+)</name>
        <dbReference type="ChEBI" id="CHEBI:57540"/>
    </ligand>
</feature>
<feature type="site" description="Activates thiol group during catalysis" evidence="1">
    <location>
        <position position="261"/>
    </location>
</feature>
<feature type="sequence conflict" description="In Ref. 3; AAO22684." evidence="6" ref="3">
    <original>N</original>
    <variation>S</variation>
    <location>
        <position position="58"/>
    </location>
</feature>
<feature type="sequence conflict" description="In Ref. 5; AAM67077." evidence="6" ref="5">
    <original>S</original>
    <variation>T</variation>
    <location>
        <position position="336"/>
    </location>
</feature>